<protein>
    <recommendedName>
        <fullName evidence="1">DNA repair protein RecO</fullName>
    </recommendedName>
    <alternativeName>
        <fullName evidence="1">Recombination protein O</fullName>
    </alternativeName>
</protein>
<reference key="1">
    <citation type="submission" date="2009-05" db="EMBL/GenBank/DDBJ databases">
        <title>Complete sequence of Tolumonas auensis DSM 9187.</title>
        <authorList>
            <consortium name="US DOE Joint Genome Institute"/>
            <person name="Lucas S."/>
            <person name="Copeland A."/>
            <person name="Lapidus A."/>
            <person name="Glavina del Rio T."/>
            <person name="Tice H."/>
            <person name="Bruce D."/>
            <person name="Goodwin L."/>
            <person name="Pitluck S."/>
            <person name="Chertkov O."/>
            <person name="Brettin T."/>
            <person name="Detter J.C."/>
            <person name="Han C."/>
            <person name="Larimer F."/>
            <person name="Land M."/>
            <person name="Hauser L."/>
            <person name="Kyrpides N."/>
            <person name="Mikhailova N."/>
            <person name="Spring S."/>
            <person name="Beller H."/>
        </authorList>
    </citation>
    <scope>NUCLEOTIDE SEQUENCE [LARGE SCALE GENOMIC DNA]</scope>
    <source>
        <strain>DSM 9187 / NBRC 110442 / TA 4</strain>
    </source>
</reference>
<keyword id="KW-0227">DNA damage</keyword>
<keyword id="KW-0233">DNA recombination</keyword>
<keyword id="KW-0234">DNA repair</keyword>
<keyword id="KW-1185">Reference proteome</keyword>
<comment type="function">
    <text evidence="1">Involved in DNA repair and RecF pathway recombination.</text>
</comment>
<comment type="similarity">
    <text evidence="1">Belongs to the RecO family.</text>
</comment>
<organism>
    <name type="scientific">Tolumonas auensis (strain DSM 9187 / NBRC 110442 / TA 4)</name>
    <dbReference type="NCBI Taxonomy" id="595494"/>
    <lineage>
        <taxon>Bacteria</taxon>
        <taxon>Pseudomonadati</taxon>
        <taxon>Pseudomonadota</taxon>
        <taxon>Gammaproteobacteria</taxon>
        <taxon>Aeromonadales</taxon>
        <taxon>Aeromonadaceae</taxon>
        <taxon>Tolumonas</taxon>
    </lineage>
</organism>
<feature type="chain" id="PRO_1000204110" description="DNA repair protein RecO">
    <location>
        <begin position="1"/>
        <end position="239"/>
    </location>
</feature>
<dbReference type="EMBL" id="CP001616">
    <property type="protein sequence ID" value="ACQ92479.1"/>
    <property type="molecule type" value="Genomic_DNA"/>
</dbReference>
<dbReference type="RefSeq" id="WP_012729078.1">
    <property type="nucleotide sequence ID" value="NC_012691.1"/>
</dbReference>
<dbReference type="SMR" id="C4LC00"/>
<dbReference type="STRING" id="595494.Tola_0851"/>
<dbReference type="KEGG" id="tau:Tola_0851"/>
<dbReference type="eggNOG" id="COG1381">
    <property type="taxonomic scope" value="Bacteria"/>
</dbReference>
<dbReference type="HOGENOM" id="CLU_066645_1_0_6"/>
<dbReference type="OrthoDB" id="9804792at2"/>
<dbReference type="Proteomes" id="UP000009073">
    <property type="component" value="Chromosome"/>
</dbReference>
<dbReference type="GO" id="GO:0043590">
    <property type="term" value="C:bacterial nucleoid"/>
    <property type="evidence" value="ECO:0007669"/>
    <property type="project" value="TreeGrafter"/>
</dbReference>
<dbReference type="GO" id="GO:0006310">
    <property type="term" value="P:DNA recombination"/>
    <property type="evidence" value="ECO:0007669"/>
    <property type="project" value="UniProtKB-UniRule"/>
</dbReference>
<dbReference type="GO" id="GO:0006302">
    <property type="term" value="P:double-strand break repair"/>
    <property type="evidence" value="ECO:0007669"/>
    <property type="project" value="TreeGrafter"/>
</dbReference>
<dbReference type="Gene3D" id="2.40.50.140">
    <property type="entry name" value="Nucleic acid-binding proteins"/>
    <property type="match status" value="1"/>
</dbReference>
<dbReference type="Gene3D" id="1.20.1440.120">
    <property type="entry name" value="Recombination protein O, C-terminal domain"/>
    <property type="match status" value="1"/>
</dbReference>
<dbReference type="HAMAP" id="MF_00201">
    <property type="entry name" value="RecO"/>
    <property type="match status" value="1"/>
</dbReference>
<dbReference type="InterPro" id="IPR037278">
    <property type="entry name" value="ARFGAP/RecO"/>
</dbReference>
<dbReference type="InterPro" id="IPR022572">
    <property type="entry name" value="DNA_rep/recomb_RecO_N"/>
</dbReference>
<dbReference type="InterPro" id="IPR012340">
    <property type="entry name" value="NA-bd_OB-fold"/>
</dbReference>
<dbReference type="InterPro" id="IPR003717">
    <property type="entry name" value="RecO"/>
</dbReference>
<dbReference type="InterPro" id="IPR042242">
    <property type="entry name" value="RecO_C"/>
</dbReference>
<dbReference type="NCBIfam" id="TIGR00613">
    <property type="entry name" value="reco"/>
    <property type="match status" value="1"/>
</dbReference>
<dbReference type="PANTHER" id="PTHR33991">
    <property type="entry name" value="DNA REPAIR PROTEIN RECO"/>
    <property type="match status" value="1"/>
</dbReference>
<dbReference type="PANTHER" id="PTHR33991:SF1">
    <property type="entry name" value="DNA REPAIR PROTEIN RECO"/>
    <property type="match status" value="1"/>
</dbReference>
<dbReference type="Pfam" id="PF02565">
    <property type="entry name" value="RecO_C"/>
    <property type="match status" value="1"/>
</dbReference>
<dbReference type="Pfam" id="PF11967">
    <property type="entry name" value="RecO_N"/>
    <property type="match status" value="1"/>
</dbReference>
<dbReference type="SUPFAM" id="SSF57863">
    <property type="entry name" value="ArfGap/RecO-like zinc finger"/>
    <property type="match status" value="1"/>
</dbReference>
<dbReference type="SUPFAM" id="SSF50249">
    <property type="entry name" value="Nucleic acid-binding proteins"/>
    <property type="match status" value="1"/>
</dbReference>
<accession>C4LC00</accession>
<name>RECO_TOLAT</name>
<sequence length="239" mass="26833">MTEPDLSPAFVLHTRPYRETSQLVDLFVASMGKVSVVAKGSRSPRSSVKGLLQPFLPLHIHYGGKSSLKTLLQLEARSPQVALQGERLFSALYLNELLYYLLEPDTEYPGLFSGYFQTLLALADQQQLVSPLLRQFELLLLQQLGYGADFCYAADSCLPIDPACYYRYEPEAGFITTALRDHAFFSGREIIGIAEQAFSDEYILAAARRFSRQAFAALLGNRPLKSRELYSAFIARRSE</sequence>
<gene>
    <name evidence="1" type="primary">recO</name>
    <name type="ordered locus">Tola_0851</name>
</gene>
<evidence type="ECO:0000255" key="1">
    <source>
        <dbReference type="HAMAP-Rule" id="MF_00201"/>
    </source>
</evidence>
<proteinExistence type="inferred from homology"/>